<comment type="function">
    <text evidence="1">In complex with KIF2C, constitutes the major microtubule plus-end depolymerizing activity in mitotic cells. Its major role may be to transport KIF2C and/or MAPRE1 along microtubules (By similarity).</text>
</comment>
<comment type="subunit">
    <text evidence="1">Interacts with MAPRE1; this interaction is required for efficient accumulation at microtubule plus ends. Interacts with KIF2C at microtubule tips; this interaction increases the affinity of both partners for microtubule plus ends and is required for robust microtubule depolymerization. KIF2C phosphorylation by AURKA or AURKB strongly reduces KIF18B-binding.</text>
</comment>
<comment type="subcellular location">
    <subcellularLocation>
        <location evidence="1">Nucleus</location>
    </subcellularLocation>
    <subcellularLocation>
        <location evidence="1">Cytoplasm</location>
    </subcellularLocation>
    <subcellularLocation>
        <location evidence="6">Cytoplasm</location>
        <location evidence="6">Cytoskeleton</location>
    </subcellularLocation>
    <text evidence="1">Present predominantly in the nucleus and to a lesser extent in the cytoplasm of interphase cells. During mitosis, found to be closely associated with astral microtubule plus ends emanating from the spindle pole during prometaphase and metaphase (By similarity).</text>
</comment>
<comment type="similarity">
    <text evidence="4">Belongs to the TRAFAC class myosin-kinesin ATPase superfamily. Kinesin family.</text>
</comment>
<dbReference type="EMBL" id="AK156592">
    <property type="protein sequence ID" value="BAE33771.1"/>
    <property type="molecule type" value="mRNA"/>
</dbReference>
<dbReference type="EMBL" id="AL731670">
    <property type="status" value="NOT_ANNOTATED_CDS"/>
    <property type="molecule type" value="Genomic_DNA"/>
</dbReference>
<dbReference type="EMBL" id="BC049272">
    <property type="protein sequence ID" value="AAH49272.1"/>
    <property type="molecule type" value="mRNA"/>
</dbReference>
<dbReference type="EMBL" id="BC057614">
    <property type="protein sequence ID" value="AAH57614.1"/>
    <property type="molecule type" value="mRNA"/>
</dbReference>
<dbReference type="CCDS" id="CCDS25508.1"/>
<dbReference type="RefSeq" id="NP_932063.2">
    <property type="nucleotide sequence ID" value="NM_197959.2"/>
</dbReference>
<dbReference type="RefSeq" id="XP_011247545.1">
    <property type="nucleotide sequence ID" value="XM_011249243.1"/>
</dbReference>
<dbReference type="SMR" id="Q6PFD6"/>
<dbReference type="BioGRID" id="213921">
    <property type="interactions" value="9"/>
</dbReference>
<dbReference type="FunCoup" id="Q6PFD6">
    <property type="interactions" value="319"/>
</dbReference>
<dbReference type="IntAct" id="Q6PFD6">
    <property type="interactions" value="7"/>
</dbReference>
<dbReference type="STRING" id="10090.ENSMUSP00000021311"/>
<dbReference type="GlyGen" id="Q6PFD6">
    <property type="glycosylation" value="1 site, 1 O-linked glycan (1 site)"/>
</dbReference>
<dbReference type="iPTMnet" id="Q6PFD6"/>
<dbReference type="PhosphoSitePlus" id="Q6PFD6"/>
<dbReference type="SwissPalm" id="Q6PFD6"/>
<dbReference type="jPOST" id="Q6PFD6"/>
<dbReference type="PaxDb" id="10090-ENSMUSP00000021311"/>
<dbReference type="PeptideAtlas" id="Q6PFD6"/>
<dbReference type="ProteomicsDB" id="269216"/>
<dbReference type="Pumba" id="Q6PFD6"/>
<dbReference type="Antibodypedia" id="8290">
    <property type="antibodies" value="20 antibodies from 9 providers"/>
</dbReference>
<dbReference type="DNASU" id="70218"/>
<dbReference type="Ensembl" id="ENSMUST00000021311.10">
    <property type="protein sequence ID" value="ENSMUSP00000021311.10"/>
    <property type="gene ID" value="ENSMUSG00000051378.11"/>
</dbReference>
<dbReference type="GeneID" id="70218"/>
<dbReference type="KEGG" id="mmu:70218"/>
<dbReference type="UCSC" id="uc007lsy.2">
    <property type="organism name" value="mouse"/>
</dbReference>
<dbReference type="AGR" id="MGI:2446979"/>
<dbReference type="CTD" id="146909"/>
<dbReference type="MGI" id="MGI:2446979">
    <property type="gene designation" value="Kif18b"/>
</dbReference>
<dbReference type="VEuPathDB" id="HostDB:ENSMUSG00000051378"/>
<dbReference type="eggNOG" id="KOG0242">
    <property type="taxonomic scope" value="Eukaryota"/>
</dbReference>
<dbReference type="GeneTree" id="ENSGT00940000161200"/>
<dbReference type="HOGENOM" id="CLU_001485_21_5_1"/>
<dbReference type="InParanoid" id="Q6PFD6"/>
<dbReference type="OMA" id="HQEEKRF"/>
<dbReference type="OrthoDB" id="3176171at2759"/>
<dbReference type="PhylomeDB" id="Q6PFD6"/>
<dbReference type="TreeFam" id="TF105231"/>
<dbReference type="Reactome" id="R-MMU-2132295">
    <property type="pathway name" value="MHC class II antigen presentation"/>
</dbReference>
<dbReference type="Reactome" id="R-MMU-6811434">
    <property type="pathway name" value="COPI-dependent Golgi-to-ER retrograde traffic"/>
</dbReference>
<dbReference type="Reactome" id="R-MMU-983189">
    <property type="pathway name" value="Kinesins"/>
</dbReference>
<dbReference type="BioGRID-ORCS" id="70218">
    <property type="hits" value="23 hits in 77 CRISPR screens"/>
</dbReference>
<dbReference type="ChiTaRS" id="Kif18b">
    <property type="organism name" value="mouse"/>
</dbReference>
<dbReference type="PRO" id="PR:Q6PFD6"/>
<dbReference type="Proteomes" id="UP000000589">
    <property type="component" value="Chromosome 11"/>
</dbReference>
<dbReference type="RNAct" id="Q6PFD6">
    <property type="molecule type" value="protein"/>
</dbReference>
<dbReference type="Bgee" id="ENSMUSG00000051378">
    <property type="expression patterns" value="Expressed in cleaving embryo and 130 other cell types or tissues"/>
</dbReference>
<dbReference type="GO" id="GO:0000235">
    <property type="term" value="C:astral microtubule"/>
    <property type="evidence" value="ECO:0007669"/>
    <property type="project" value="Ensembl"/>
</dbReference>
<dbReference type="GO" id="GO:0005737">
    <property type="term" value="C:cytoplasm"/>
    <property type="evidence" value="ECO:0000250"/>
    <property type="project" value="UniProtKB"/>
</dbReference>
<dbReference type="GO" id="GO:0005829">
    <property type="term" value="C:cytosol"/>
    <property type="evidence" value="ECO:0007669"/>
    <property type="project" value="Ensembl"/>
</dbReference>
<dbReference type="GO" id="GO:0035371">
    <property type="term" value="C:microtubule plus-end"/>
    <property type="evidence" value="ECO:0007669"/>
    <property type="project" value="Ensembl"/>
</dbReference>
<dbReference type="GO" id="GO:0016604">
    <property type="term" value="C:nuclear body"/>
    <property type="evidence" value="ECO:0007669"/>
    <property type="project" value="Ensembl"/>
</dbReference>
<dbReference type="GO" id="GO:0005730">
    <property type="term" value="C:nucleolus"/>
    <property type="evidence" value="ECO:0007669"/>
    <property type="project" value="Ensembl"/>
</dbReference>
<dbReference type="GO" id="GO:0005634">
    <property type="term" value="C:nucleus"/>
    <property type="evidence" value="ECO:0000250"/>
    <property type="project" value="UniProtKB"/>
</dbReference>
<dbReference type="GO" id="GO:0005524">
    <property type="term" value="F:ATP binding"/>
    <property type="evidence" value="ECO:0007669"/>
    <property type="project" value="UniProtKB-KW"/>
</dbReference>
<dbReference type="GO" id="GO:0019894">
    <property type="term" value="F:kinesin binding"/>
    <property type="evidence" value="ECO:0007669"/>
    <property type="project" value="Ensembl"/>
</dbReference>
<dbReference type="GO" id="GO:0008017">
    <property type="term" value="F:microtubule binding"/>
    <property type="evidence" value="ECO:0007669"/>
    <property type="project" value="InterPro"/>
</dbReference>
<dbReference type="GO" id="GO:0003777">
    <property type="term" value="F:microtubule motor activity"/>
    <property type="evidence" value="ECO:0007669"/>
    <property type="project" value="InterPro"/>
</dbReference>
<dbReference type="GO" id="GO:0051301">
    <property type="term" value="P:cell division"/>
    <property type="evidence" value="ECO:0007669"/>
    <property type="project" value="UniProtKB-KW"/>
</dbReference>
<dbReference type="GO" id="GO:0007019">
    <property type="term" value="P:microtubule depolymerization"/>
    <property type="evidence" value="ECO:0007669"/>
    <property type="project" value="Ensembl"/>
</dbReference>
<dbReference type="GO" id="GO:0007018">
    <property type="term" value="P:microtubule-based movement"/>
    <property type="evidence" value="ECO:0007669"/>
    <property type="project" value="InterPro"/>
</dbReference>
<dbReference type="GO" id="GO:0000278">
    <property type="term" value="P:mitotic cell cycle"/>
    <property type="evidence" value="ECO:0000250"/>
    <property type="project" value="UniProtKB"/>
</dbReference>
<dbReference type="GO" id="GO:0051302">
    <property type="term" value="P:regulation of cell division"/>
    <property type="evidence" value="ECO:0000250"/>
    <property type="project" value="UniProtKB"/>
</dbReference>
<dbReference type="CDD" id="cd01370">
    <property type="entry name" value="KISc_KIP3_like"/>
    <property type="match status" value="1"/>
</dbReference>
<dbReference type="FunFam" id="3.40.850.10:FF:000027">
    <property type="entry name" value="Kinesin-like protein"/>
    <property type="match status" value="1"/>
</dbReference>
<dbReference type="Gene3D" id="3.40.850.10">
    <property type="entry name" value="Kinesin motor domain"/>
    <property type="match status" value="1"/>
</dbReference>
<dbReference type="InterPro" id="IPR027640">
    <property type="entry name" value="Kinesin-like_fam"/>
</dbReference>
<dbReference type="InterPro" id="IPR019821">
    <property type="entry name" value="Kinesin_motor_CS"/>
</dbReference>
<dbReference type="InterPro" id="IPR001752">
    <property type="entry name" value="Kinesin_motor_dom"/>
</dbReference>
<dbReference type="InterPro" id="IPR036961">
    <property type="entry name" value="Kinesin_motor_dom_sf"/>
</dbReference>
<dbReference type="InterPro" id="IPR027417">
    <property type="entry name" value="P-loop_NTPase"/>
</dbReference>
<dbReference type="PANTHER" id="PTHR47968">
    <property type="entry name" value="CENTROMERE PROTEIN E"/>
    <property type="match status" value="1"/>
</dbReference>
<dbReference type="PANTHER" id="PTHR47968:SF71">
    <property type="entry name" value="KINESIN-LIKE PROTEIN"/>
    <property type="match status" value="1"/>
</dbReference>
<dbReference type="Pfam" id="PF00225">
    <property type="entry name" value="Kinesin"/>
    <property type="match status" value="1"/>
</dbReference>
<dbReference type="PRINTS" id="PR00380">
    <property type="entry name" value="KINESINHEAVY"/>
</dbReference>
<dbReference type="SMART" id="SM00129">
    <property type="entry name" value="KISc"/>
    <property type="match status" value="1"/>
</dbReference>
<dbReference type="SUPFAM" id="SSF52540">
    <property type="entry name" value="P-loop containing nucleoside triphosphate hydrolases"/>
    <property type="match status" value="1"/>
</dbReference>
<dbReference type="PROSITE" id="PS00411">
    <property type="entry name" value="KINESIN_MOTOR_1"/>
    <property type="match status" value="1"/>
</dbReference>
<dbReference type="PROSITE" id="PS50067">
    <property type="entry name" value="KINESIN_MOTOR_2"/>
    <property type="match status" value="1"/>
</dbReference>
<protein>
    <recommendedName>
        <fullName>Kinesin-like protein KIF18B</fullName>
    </recommendedName>
</protein>
<feature type="chain" id="PRO_0000318970" description="Kinesin-like protein KIF18B">
    <location>
        <begin position="1"/>
        <end position="834"/>
    </location>
</feature>
<feature type="domain" description="Kinesin motor" evidence="4">
    <location>
        <begin position="9"/>
        <end position="353"/>
    </location>
</feature>
<feature type="region of interest" description="Disordered" evidence="5">
    <location>
        <begin position="400"/>
        <end position="508"/>
    </location>
</feature>
<feature type="region of interest" description="Disordered" evidence="5">
    <location>
        <begin position="602"/>
        <end position="642"/>
    </location>
</feature>
<feature type="region of interest" description="Disordered" evidence="5">
    <location>
        <begin position="655"/>
        <end position="686"/>
    </location>
</feature>
<feature type="region of interest" description="Disordered" evidence="5">
    <location>
        <begin position="800"/>
        <end position="834"/>
    </location>
</feature>
<feature type="coiled-coil region" evidence="3">
    <location>
        <begin position="368"/>
        <end position="404"/>
    </location>
</feature>
<feature type="short sequence motif" description="Nuclear localization signal" evidence="1">
    <location>
        <begin position="619"/>
        <end position="627"/>
    </location>
</feature>
<feature type="compositionally biased region" description="Low complexity" evidence="5">
    <location>
        <begin position="411"/>
        <end position="432"/>
    </location>
</feature>
<feature type="compositionally biased region" description="Polar residues" evidence="5">
    <location>
        <begin position="462"/>
        <end position="474"/>
    </location>
</feature>
<feature type="compositionally biased region" description="Basic and acidic residues" evidence="5">
    <location>
        <begin position="611"/>
        <end position="620"/>
    </location>
</feature>
<feature type="binding site" evidence="4">
    <location>
        <begin position="111"/>
        <end position="118"/>
    </location>
    <ligand>
        <name>ATP</name>
        <dbReference type="ChEBI" id="CHEBI:30616"/>
    </ligand>
</feature>
<feature type="modified residue" description="Phosphothreonine" evidence="2">
    <location>
        <position position="431"/>
    </location>
</feature>
<feature type="modified residue" description="Phosphoserine" evidence="2">
    <location>
        <position position="484"/>
    </location>
</feature>
<feature type="modified residue" description="Phosphoserine" evidence="2">
    <location>
        <position position="634"/>
    </location>
</feature>
<feature type="modified residue" description="Phosphoserine" evidence="2">
    <location>
        <position position="657"/>
    </location>
</feature>
<feature type="modified residue" description="Phosphothreonine" evidence="2">
    <location>
        <position position="669"/>
    </location>
</feature>
<feature type="modified residue" description="Phosphoserine" evidence="2">
    <location>
        <position position="814"/>
    </location>
</feature>
<feature type="sequence conflict" description="In Ref. 3; AAH57614." evidence="6" ref="3">
    <original>S</original>
    <variation>I</variation>
    <location>
        <position position="211"/>
    </location>
</feature>
<sequence length="834" mass="91936">MVMAVEDSVVRVVVRVRPPTPKELESQRRPVIQVVDERMLVFDPEECDGGFPGLKWSGSHNGPKKKGKDLTFVFDRVFGEMATQEDVFQHTTHNILDSFLQGYNCSVFAYGATGAGKTHTMLGREGEPGIMYLTTMELYRRLEARQEEKQFEVLISYLEVYNEQIHDLLEPKGPLTIREDPDKGVVVPGLSFHQPASAEQLLEMLTRGNCSRTQHPTDANATSSRSHAIFQIFVKQQDRVPGLTQALRVAKMSLIDLAGSERASSTHAKGERLREGANINRSLLALINVLNALADAKGRKSHVPYRDSKLTRLLKDSIGGNCRTVMIAAISPSSLTYEDTYNTLKYADRAKEIRLTLKSNVISVDHHISQYATICQQLQAEVAFLREKLQMYEAGAQALQQQCSPQPPTLSIPQSLSSSSLQPGPSSQSSTLECHAKNETLQEESLGSDAQGQEIVEESASEQEQCPQDKQCPTQKPEPNLPGSPSPSVQAKPGTGQHSPQKQDADHSKQLALQVLRLAQRQYSLLQAANLLTPDMISEFETLQQLVLEESVDHRAESPRSPALARGDPLAQALCSESKSSGYCGPVTRTMAKQLNGLTHTLGAPLAPDCTSDKTFQKPTKEKKRKLTPEEPGSLPAPNLEMKRQRQSFLPCLRRGSLPKAQPCSEPRTPKRERASSPSPSSRVCPATVIKSRVPLGPSALQNCSTPLALPTRDLNTTFNVSEESPSKPSFQEFVDWEKVSPELNSTDQPFLPSAPVFIFTKGRKPSLPAVTASKKRRTMRPSVSRGRSCIARLHSSTLKKPNRPFTVPEPPLSPHCLDDQRTPKGLTGVTESY</sequence>
<evidence type="ECO:0000250" key="1"/>
<evidence type="ECO:0000250" key="2">
    <source>
        <dbReference type="UniProtKB" id="Q86Y91"/>
    </source>
</evidence>
<evidence type="ECO:0000255" key="3"/>
<evidence type="ECO:0000255" key="4">
    <source>
        <dbReference type="PROSITE-ProRule" id="PRU00283"/>
    </source>
</evidence>
<evidence type="ECO:0000256" key="5">
    <source>
        <dbReference type="SAM" id="MobiDB-lite"/>
    </source>
</evidence>
<evidence type="ECO:0000305" key="6"/>
<name>KI18B_MOUSE</name>
<organism>
    <name type="scientific">Mus musculus</name>
    <name type="common">Mouse</name>
    <dbReference type="NCBI Taxonomy" id="10090"/>
    <lineage>
        <taxon>Eukaryota</taxon>
        <taxon>Metazoa</taxon>
        <taxon>Chordata</taxon>
        <taxon>Craniata</taxon>
        <taxon>Vertebrata</taxon>
        <taxon>Euteleostomi</taxon>
        <taxon>Mammalia</taxon>
        <taxon>Eutheria</taxon>
        <taxon>Euarchontoglires</taxon>
        <taxon>Glires</taxon>
        <taxon>Rodentia</taxon>
        <taxon>Myomorpha</taxon>
        <taxon>Muroidea</taxon>
        <taxon>Muridae</taxon>
        <taxon>Murinae</taxon>
        <taxon>Mus</taxon>
        <taxon>Mus</taxon>
    </lineage>
</organism>
<keyword id="KW-0067">ATP-binding</keyword>
<keyword id="KW-0131">Cell cycle</keyword>
<keyword id="KW-0132">Cell division</keyword>
<keyword id="KW-0175">Coiled coil</keyword>
<keyword id="KW-0963">Cytoplasm</keyword>
<keyword id="KW-0206">Cytoskeleton</keyword>
<keyword id="KW-0493">Microtubule</keyword>
<keyword id="KW-0498">Mitosis</keyword>
<keyword id="KW-0505">Motor protein</keyword>
<keyword id="KW-0547">Nucleotide-binding</keyword>
<keyword id="KW-0539">Nucleus</keyword>
<keyword id="KW-0597">Phosphoprotein</keyword>
<keyword id="KW-1185">Reference proteome</keyword>
<gene>
    <name type="primary">Kif18b</name>
</gene>
<proteinExistence type="evidence at transcript level"/>
<accession>Q6PFD6</accession>
<accession>Q3U0T0</accession>
<accession>Q80V20</accession>
<reference key="1">
    <citation type="journal article" date="2005" name="Science">
        <title>The transcriptional landscape of the mammalian genome.</title>
        <authorList>
            <person name="Carninci P."/>
            <person name="Kasukawa T."/>
            <person name="Katayama S."/>
            <person name="Gough J."/>
            <person name="Frith M.C."/>
            <person name="Maeda N."/>
            <person name="Oyama R."/>
            <person name="Ravasi T."/>
            <person name="Lenhard B."/>
            <person name="Wells C."/>
            <person name="Kodzius R."/>
            <person name="Shimokawa K."/>
            <person name="Bajic V.B."/>
            <person name="Brenner S.E."/>
            <person name="Batalov S."/>
            <person name="Forrest A.R."/>
            <person name="Zavolan M."/>
            <person name="Davis M.J."/>
            <person name="Wilming L.G."/>
            <person name="Aidinis V."/>
            <person name="Allen J.E."/>
            <person name="Ambesi-Impiombato A."/>
            <person name="Apweiler R."/>
            <person name="Aturaliya R.N."/>
            <person name="Bailey T.L."/>
            <person name="Bansal M."/>
            <person name="Baxter L."/>
            <person name="Beisel K.W."/>
            <person name="Bersano T."/>
            <person name="Bono H."/>
            <person name="Chalk A.M."/>
            <person name="Chiu K.P."/>
            <person name="Choudhary V."/>
            <person name="Christoffels A."/>
            <person name="Clutterbuck D.R."/>
            <person name="Crowe M.L."/>
            <person name="Dalla E."/>
            <person name="Dalrymple B.P."/>
            <person name="de Bono B."/>
            <person name="Della Gatta G."/>
            <person name="di Bernardo D."/>
            <person name="Down T."/>
            <person name="Engstrom P."/>
            <person name="Fagiolini M."/>
            <person name="Faulkner G."/>
            <person name="Fletcher C.F."/>
            <person name="Fukushima T."/>
            <person name="Furuno M."/>
            <person name="Futaki S."/>
            <person name="Gariboldi M."/>
            <person name="Georgii-Hemming P."/>
            <person name="Gingeras T.R."/>
            <person name="Gojobori T."/>
            <person name="Green R.E."/>
            <person name="Gustincich S."/>
            <person name="Harbers M."/>
            <person name="Hayashi Y."/>
            <person name="Hensch T.K."/>
            <person name="Hirokawa N."/>
            <person name="Hill D."/>
            <person name="Huminiecki L."/>
            <person name="Iacono M."/>
            <person name="Ikeo K."/>
            <person name="Iwama A."/>
            <person name="Ishikawa T."/>
            <person name="Jakt M."/>
            <person name="Kanapin A."/>
            <person name="Katoh M."/>
            <person name="Kawasawa Y."/>
            <person name="Kelso J."/>
            <person name="Kitamura H."/>
            <person name="Kitano H."/>
            <person name="Kollias G."/>
            <person name="Krishnan S.P."/>
            <person name="Kruger A."/>
            <person name="Kummerfeld S.K."/>
            <person name="Kurochkin I.V."/>
            <person name="Lareau L.F."/>
            <person name="Lazarevic D."/>
            <person name="Lipovich L."/>
            <person name="Liu J."/>
            <person name="Liuni S."/>
            <person name="McWilliam S."/>
            <person name="Madan Babu M."/>
            <person name="Madera M."/>
            <person name="Marchionni L."/>
            <person name="Matsuda H."/>
            <person name="Matsuzawa S."/>
            <person name="Miki H."/>
            <person name="Mignone F."/>
            <person name="Miyake S."/>
            <person name="Morris K."/>
            <person name="Mottagui-Tabar S."/>
            <person name="Mulder N."/>
            <person name="Nakano N."/>
            <person name="Nakauchi H."/>
            <person name="Ng P."/>
            <person name="Nilsson R."/>
            <person name="Nishiguchi S."/>
            <person name="Nishikawa S."/>
            <person name="Nori F."/>
            <person name="Ohara O."/>
            <person name="Okazaki Y."/>
            <person name="Orlando V."/>
            <person name="Pang K.C."/>
            <person name="Pavan W.J."/>
            <person name="Pavesi G."/>
            <person name="Pesole G."/>
            <person name="Petrovsky N."/>
            <person name="Piazza S."/>
            <person name="Reed J."/>
            <person name="Reid J.F."/>
            <person name="Ring B.Z."/>
            <person name="Ringwald M."/>
            <person name="Rost B."/>
            <person name="Ruan Y."/>
            <person name="Salzberg S.L."/>
            <person name="Sandelin A."/>
            <person name="Schneider C."/>
            <person name="Schoenbach C."/>
            <person name="Sekiguchi K."/>
            <person name="Semple C.A."/>
            <person name="Seno S."/>
            <person name="Sessa L."/>
            <person name="Sheng Y."/>
            <person name="Shibata Y."/>
            <person name="Shimada H."/>
            <person name="Shimada K."/>
            <person name="Silva D."/>
            <person name="Sinclair B."/>
            <person name="Sperling S."/>
            <person name="Stupka E."/>
            <person name="Sugiura K."/>
            <person name="Sultana R."/>
            <person name="Takenaka Y."/>
            <person name="Taki K."/>
            <person name="Tammoja K."/>
            <person name="Tan S.L."/>
            <person name="Tang S."/>
            <person name="Taylor M.S."/>
            <person name="Tegner J."/>
            <person name="Teichmann S.A."/>
            <person name="Ueda H.R."/>
            <person name="van Nimwegen E."/>
            <person name="Verardo R."/>
            <person name="Wei C.L."/>
            <person name="Yagi K."/>
            <person name="Yamanishi H."/>
            <person name="Zabarovsky E."/>
            <person name="Zhu S."/>
            <person name="Zimmer A."/>
            <person name="Hide W."/>
            <person name="Bult C."/>
            <person name="Grimmond S.M."/>
            <person name="Teasdale R.D."/>
            <person name="Liu E.T."/>
            <person name="Brusic V."/>
            <person name="Quackenbush J."/>
            <person name="Wahlestedt C."/>
            <person name="Mattick J.S."/>
            <person name="Hume D.A."/>
            <person name="Kai C."/>
            <person name="Sasaki D."/>
            <person name="Tomaru Y."/>
            <person name="Fukuda S."/>
            <person name="Kanamori-Katayama M."/>
            <person name="Suzuki M."/>
            <person name="Aoki J."/>
            <person name="Arakawa T."/>
            <person name="Iida J."/>
            <person name="Imamura K."/>
            <person name="Itoh M."/>
            <person name="Kato T."/>
            <person name="Kawaji H."/>
            <person name="Kawagashira N."/>
            <person name="Kawashima T."/>
            <person name="Kojima M."/>
            <person name="Kondo S."/>
            <person name="Konno H."/>
            <person name="Nakano K."/>
            <person name="Ninomiya N."/>
            <person name="Nishio T."/>
            <person name="Okada M."/>
            <person name="Plessy C."/>
            <person name="Shibata K."/>
            <person name="Shiraki T."/>
            <person name="Suzuki S."/>
            <person name="Tagami M."/>
            <person name="Waki K."/>
            <person name="Watahiki A."/>
            <person name="Okamura-Oho Y."/>
            <person name="Suzuki H."/>
            <person name="Kawai J."/>
            <person name="Hayashizaki Y."/>
        </authorList>
    </citation>
    <scope>NUCLEOTIDE SEQUENCE [LARGE SCALE MRNA]</scope>
    <source>
        <strain>NOD</strain>
        <tissue>Spleen</tissue>
    </source>
</reference>
<reference key="2">
    <citation type="journal article" date="2009" name="PLoS Biol.">
        <title>Lineage-specific biology revealed by a finished genome assembly of the mouse.</title>
        <authorList>
            <person name="Church D.M."/>
            <person name="Goodstadt L."/>
            <person name="Hillier L.W."/>
            <person name="Zody M.C."/>
            <person name="Goldstein S."/>
            <person name="She X."/>
            <person name="Bult C.J."/>
            <person name="Agarwala R."/>
            <person name="Cherry J.L."/>
            <person name="DiCuccio M."/>
            <person name="Hlavina W."/>
            <person name="Kapustin Y."/>
            <person name="Meric P."/>
            <person name="Maglott D."/>
            <person name="Birtle Z."/>
            <person name="Marques A.C."/>
            <person name="Graves T."/>
            <person name="Zhou S."/>
            <person name="Teague B."/>
            <person name="Potamousis K."/>
            <person name="Churas C."/>
            <person name="Place M."/>
            <person name="Herschleb J."/>
            <person name="Runnheim R."/>
            <person name="Forrest D."/>
            <person name="Amos-Landgraf J."/>
            <person name="Schwartz D.C."/>
            <person name="Cheng Z."/>
            <person name="Lindblad-Toh K."/>
            <person name="Eichler E.E."/>
            <person name="Ponting C.P."/>
        </authorList>
    </citation>
    <scope>NUCLEOTIDE SEQUENCE [LARGE SCALE GENOMIC DNA]</scope>
    <source>
        <strain>C57BL/6J</strain>
    </source>
</reference>
<reference key="3">
    <citation type="journal article" date="2004" name="Genome Res.">
        <title>The status, quality, and expansion of the NIH full-length cDNA project: the Mammalian Gene Collection (MGC).</title>
        <authorList>
            <consortium name="The MGC Project Team"/>
        </authorList>
    </citation>
    <scope>NUCLEOTIDE SEQUENCE [LARGE SCALE MRNA]</scope>
    <source>
        <strain>C57BL/6J</strain>
        <strain>FVB/N</strain>
        <tissue>Mammary tumor</tissue>
    </source>
</reference>